<name>RK36_BIGNA</name>
<evidence type="ECO:0000255" key="1">
    <source>
        <dbReference type="HAMAP-Rule" id="MF_00251"/>
    </source>
</evidence>
<evidence type="ECO:0000305" key="2"/>
<accession>Q06J37</accession>
<comment type="subcellular location">
    <subcellularLocation>
        <location>Plastid</location>
        <location>Chloroplast</location>
    </subcellularLocation>
</comment>
<comment type="similarity">
    <text evidence="1">Belongs to the bacterial ribosomal protein bL36 family.</text>
</comment>
<sequence length="37" mass="4239">MKVKSSVRKICENCKVIRRSGKVIVICSNPKHKQRQG</sequence>
<keyword id="KW-0150">Chloroplast</keyword>
<keyword id="KW-0934">Plastid</keyword>
<keyword id="KW-0687">Ribonucleoprotein</keyword>
<keyword id="KW-0689">Ribosomal protein</keyword>
<geneLocation type="chloroplast"/>
<proteinExistence type="inferred from homology"/>
<organism>
    <name type="scientific">Bigelowiella natans</name>
    <name type="common">Pedinomonas minutissima</name>
    <name type="synonym">Chlorarachnion sp. (strain CCMP621)</name>
    <dbReference type="NCBI Taxonomy" id="227086"/>
    <lineage>
        <taxon>Eukaryota</taxon>
        <taxon>Sar</taxon>
        <taxon>Rhizaria</taxon>
        <taxon>Cercozoa</taxon>
        <taxon>Chlorarachniophyceae</taxon>
        <taxon>Bigelowiella</taxon>
    </lineage>
</organism>
<dbReference type="EMBL" id="DQ851108">
    <property type="protein sequence ID" value="ABG91422.1"/>
    <property type="molecule type" value="Genomic_DNA"/>
</dbReference>
<dbReference type="RefSeq" id="YP_778590.1">
    <property type="nucleotide sequence ID" value="NC_008408.1"/>
</dbReference>
<dbReference type="SMR" id="Q06J37"/>
<dbReference type="GeneID" id="4353007"/>
<dbReference type="GO" id="GO:0009507">
    <property type="term" value="C:chloroplast"/>
    <property type="evidence" value="ECO:0007669"/>
    <property type="project" value="UniProtKB-SubCell"/>
</dbReference>
<dbReference type="GO" id="GO:1990904">
    <property type="term" value="C:ribonucleoprotein complex"/>
    <property type="evidence" value="ECO:0007669"/>
    <property type="project" value="UniProtKB-KW"/>
</dbReference>
<dbReference type="GO" id="GO:0005840">
    <property type="term" value="C:ribosome"/>
    <property type="evidence" value="ECO:0007669"/>
    <property type="project" value="UniProtKB-KW"/>
</dbReference>
<dbReference type="GO" id="GO:0003735">
    <property type="term" value="F:structural constituent of ribosome"/>
    <property type="evidence" value="ECO:0007669"/>
    <property type="project" value="InterPro"/>
</dbReference>
<dbReference type="GO" id="GO:0006412">
    <property type="term" value="P:translation"/>
    <property type="evidence" value="ECO:0007669"/>
    <property type="project" value="UniProtKB-UniRule"/>
</dbReference>
<dbReference type="HAMAP" id="MF_00251">
    <property type="entry name" value="Ribosomal_bL36"/>
    <property type="match status" value="1"/>
</dbReference>
<dbReference type="InterPro" id="IPR000473">
    <property type="entry name" value="Ribosomal_bL36"/>
</dbReference>
<dbReference type="InterPro" id="IPR035977">
    <property type="entry name" value="Ribosomal_bL36_sp"/>
</dbReference>
<dbReference type="NCBIfam" id="TIGR01022">
    <property type="entry name" value="rpmJ_bact"/>
    <property type="match status" value="1"/>
</dbReference>
<dbReference type="PANTHER" id="PTHR42888">
    <property type="entry name" value="50S RIBOSOMAL PROTEIN L36, CHLOROPLASTIC"/>
    <property type="match status" value="1"/>
</dbReference>
<dbReference type="PANTHER" id="PTHR42888:SF1">
    <property type="entry name" value="LARGE RIBOSOMAL SUBUNIT PROTEIN BL36C"/>
    <property type="match status" value="1"/>
</dbReference>
<dbReference type="Pfam" id="PF00444">
    <property type="entry name" value="Ribosomal_L36"/>
    <property type="match status" value="1"/>
</dbReference>
<dbReference type="SUPFAM" id="SSF57840">
    <property type="entry name" value="Ribosomal protein L36"/>
    <property type="match status" value="1"/>
</dbReference>
<dbReference type="PROSITE" id="PS00828">
    <property type="entry name" value="RIBOSOMAL_L36"/>
    <property type="match status" value="1"/>
</dbReference>
<protein>
    <recommendedName>
        <fullName evidence="1">Large ribosomal subunit protein bL36c</fullName>
    </recommendedName>
    <alternativeName>
        <fullName evidence="2">50S ribosomal protein L36, chloroplastic</fullName>
    </alternativeName>
</protein>
<feature type="chain" id="PRO_0000295866" description="Large ribosomal subunit protein bL36c">
    <location>
        <begin position="1"/>
        <end position="37"/>
    </location>
</feature>
<gene>
    <name evidence="1" type="primary">rpl36</name>
</gene>
<reference key="1">
    <citation type="journal article" date="2007" name="Mol. Biol. Evol.">
        <title>The complete chloroplast genome of the chlorarachniophyte Bigelowiella natans: evidence for independent origins of chlorarachniophyte and euglenid secondary endosymbionts.</title>
        <authorList>
            <person name="Rogers M.B."/>
            <person name="Gilson P.R."/>
            <person name="Su V."/>
            <person name="McFadden G.I."/>
            <person name="Keeling P.J."/>
        </authorList>
    </citation>
    <scope>NUCLEOTIDE SEQUENCE [LARGE SCALE GENOMIC DNA]</scope>
</reference>